<name>HTPX_ECO55</name>
<feature type="chain" id="PRO_1000124228" description="Protease HtpX">
    <location>
        <begin position="1"/>
        <end position="293"/>
    </location>
</feature>
<feature type="transmembrane region" description="Helical" evidence="1">
    <location>
        <begin position="4"/>
        <end position="24"/>
    </location>
</feature>
<feature type="transmembrane region" description="Helical" evidence="1">
    <location>
        <begin position="34"/>
        <end position="54"/>
    </location>
</feature>
<feature type="transmembrane region" description="Helical" evidence="1">
    <location>
        <begin position="158"/>
        <end position="178"/>
    </location>
</feature>
<feature type="transmembrane region" description="Helical" evidence="1">
    <location>
        <begin position="193"/>
        <end position="213"/>
    </location>
</feature>
<feature type="active site" evidence="1">
    <location>
        <position position="140"/>
    </location>
</feature>
<feature type="binding site" evidence="1">
    <location>
        <position position="139"/>
    </location>
    <ligand>
        <name>Zn(2+)</name>
        <dbReference type="ChEBI" id="CHEBI:29105"/>
        <note>catalytic</note>
    </ligand>
</feature>
<feature type="binding site" evidence="1">
    <location>
        <position position="143"/>
    </location>
    <ligand>
        <name>Zn(2+)</name>
        <dbReference type="ChEBI" id="CHEBI:29105"/>
        <note>catalytic</note>
    </ligand>
</feature>
<feature type="binding site" evidence="1">
    <location>
        <position position="222"/>
    </location>
    <ligand>
        <name>Zn(2+)</name>
        <dbReference type="ChEBI" id="CHEBI:29105"/>
        <note>catalytic</note>
    </ligand>
</feature>
<organism>
    <name type="scientific">Escherichia coli (strain 55989 / EAEC)</name>
    <dbReference type="NCBI Taxonomy" id="585055"/>
    <lineage>
        <taxon>Bacteria</taxon>
        <taxon>Pseudomonadati</taxon>
        <taxon>Pseudomonadota</taxon>
        <taxon>Gammaproteobacteria</taxon>
        <taxon>Enterobacterales</taxon>
        <taxon>Enterobacteriaceae</taxon>
        <taxon>Escherichia</taxon>
    </lineage>
</organism>
<gene>
    <name evidence="1" type="primary">htpX</name>
    <name type="ordered locus">EC55989_2006</name>
</gene>
<proteinExistence type="inferred from homology"/>
<dbReference type="EC" id="3.4.24.-" evidence="1"/>
<dbReference type="EMBL" id="CU928145">
    <property type="protein sequence ID" value="CAU97864.1"/>
    <property type="molecule type" value="Genomic_DNA"/>
</dbReference>
<dbReference type="RefSeq" id="WP_000984517.1">
    <property type="nucleotide sequence ID" value="NZ_CP028304.1"/>
</dbReference>
<dbReference type="SMR" id="B7L7N1"/>
<dbReference type="MEROPS" id="M48.002"/>
<dbReference type="GeneID" id="93776079"/>
<dbReference type="KEGG" id="eck:EC55989_2006"/>
<dbReference type="HOGENOM" id="CLU_042266_1_0_6"/>
<dbReference type="Proteomes" id="UP000000746">
    <property type="component" value="Chromosome"/>
</dbReference>
<dbReference type="GO" id="GO:0005886">
    <property type="term" value="C:plasma membrane"/>
    <property type="evidence" value="ECO:0007669"/>
    <property type="project" value="UniProtKB-SubCell"/>
</dbReference>
<dbReference type="GO" id="GO:0004222">
    <property type="term" value="F:metalloendopeptidase activity"/>
    <property type="evidence" value="ECO:0007669"/>
    <property type="project" value="UniProtKB-UniRule"/>
</dbReference>
<dbReference type="GO" id="GO:0008270">
    <property type="term" value="F:zinc ion binding"/>
    <property type="evidence" value="ECO:0007669"/>
    <property type="project" value="UniProtKB-UniRule"/>
</dbReference>
<dbReference type="GO" id="GO:0006508">
    <property type="term" value="P:proteolysis"/>
    <property type="evidence" value="ECO:0007669"/>
    <property type="project" value="UniProtKB-KW"/>
</dbReference>
<dbReference type="CDD" id="cd07335">
    <property type="entry name" value="M48B_HtpX_like"/>
    <property type="match status" value="1"/>
</dbReference>
<dbReference type="FunFam" id="3.30.2010.10:FF:000001">
    <property type="entry name" value="Protease HtpX"/>
    <property type="match status" value="1"/>
</dbReference>
<dbReference type="Gene3D" id="3.30.2010.10">
    <property type="entry name" value="Metalloproteases ('zincins'), catalytic domain"/>
    <property type="match status" value="1"/>
</dbReference>
<dbReference type="HAMAP" id="MF_00188">
    <property type="entry name" value="Pept_M48_protease_HtpX"/>
    <property type="match status" value="1"/>
</dbReference>
<dbReference type="InterPro" id="IPR050083">
    <property type="entry name" value="HtpX_protease"/>
</dbReference>
<dbReference type="InterPro" id="IPR022919">
    <property type="entry name" value="Pept_M48_protease_HtpX"/>
</dbReference>
<dbReference type="InterPro" id="IPR001915">
    <property type="entry name" value="Peptidase_M48"/>
</dbReference>
<dbReference type="NCBIfam" id="NF003965">
    <property type="entry name" value="PRK05457.1"/>
    <property type="match status" value="1"/>
</dbReference>
<dbReference type="PANTHER" id="PTHR43221">
    <property type="entry name" value="PROTEASE HTPX"/>
    <property type="match status" value="1"/>
</dbReference>
<dbReference type="PANTHER" id="PTHR43221:SF1">
    <property type="entry name" value="PROTEASE HTPX"/>
    <property type="match status" value="1"/>
</dbReference>
<dbReference type="Pfam" id="PF01435">
    <property type="entry name" value="Peptidase_M48"/>
    <property type="match status" value="1"/>
</dbReference>
<comment type="cofactor">
    <cofactor evidence="1">
        <name>Zn(2+)</name>
        <dbReference type="ChEBI" id="CHEBI:29105"/>
    </cofactor>
    <text evidence="1">Binds 1 zinc ion per subunit.</text>
</comment>
<comment type="subcellular location">
    <subcellularLocation>
        <location evidence="1">Cell inner membrane</location>
        <topology evidence="1">Multi-pass membrane protein</topology>
    </subcellularLocation>
</comment>
<comment type="similarity">
    <text evidence="1">Belongs to the peptidase M48B family.</text>
</comment>
<evidence type="ECO:0000255" key="1">
    <source>
        <dbReference type="HAMAP-Rule" id="MF_00188"/>
    </source>
</evidence>
<sequence>MMRIALFLLTNLAVMVVFGLVLSLTGIQSSSVQGLMIMALLFGFGGSFVSLLMSKWMALRSVGGEVIEQPRNERERWLVNTVATQARQAGIAMPQVAIYHAPDINAFATGARRDASLVAVSTGLLQNMSPDEAEAVIAHEISHIANGDMVTMTLIQGVVNTFVIFISRILAQLAAGFMGGNRDEGEESNGNPLIYFAVATVLELVFGILASIITMWFSRHREFHADAGSAKLVGREKMIAALQRLKTSYEPQEATSMMAFCINGKSKSLSELFMTHPPLDKRIEALRTGEYLK</sequence>
<reference key="1">
    <citation type="journal article" date="2009" name="PLoS Genet.">
        <title>Organised genome dynamics in the Escherichia coli species results in highly diverse adaptive paths.</title>
        <authorList>
            <person name="Touchon M."/>
            <person name="Hoede C."/>
            <person name="Tenaillon O."/>
            <person name="Barbe V."/>
            <person name="Baeriswyl S."/>
            <person name="Bidet P."/>
            <person name="Bingen E."/>
            <person name="Bonacorsi S."/>
            <person name="Bouchier C."/>
            <person name="Bouvet O."/>
            <person name="Calteau A."/>
            <person name="Chiapello H."/>
            <person name="Clermont O."/>
            <person name="Cruveiller S."/>
            <person name="Danchin A."/>
            <person name="Diard M."/>
            <person name="Dossat C."/>
            <person name="Karoui M.E."/>
            <person name="Frapy E."/>
            <person name="Garry L."/>
            <person name="Ghigo J.M."/>
            <person name="Gilles A.M."/>
            <person name="Johnson J."/>
            <person name="Le Bouguenec C."/>
            <person name="Lescat M."/>
            <person name="Mangenot S."/>
            <person name="Martinez-Jehanne V."/>
            <person name="Matic I."/>
            <person name="Nassif X."/>
            <person name="Oztas S."/>
            <person name="Petit M.A."/>
            <person name="Pichon C."/>
            <person name="Rouy Z."/>
            <person name="Ruf C.S."/>
            <person name="Schneider D."/>
            <person name="Tourret J."/>
            <person name="Vacherie B."/>
            <person name="Vallenet D."/>
            <person name="Medigue C."/>
            <person name="Rocha E.P.C."/>
            <person name="Denamur E."/>
        </authorList>
    </citation>
    <scope>NUCLEOTIDE SEQUENCE [LARGE SCALE GENOMIC DNA]</scope>
    <source>
        <strain>55989 / EAEC</strain>
    </source>
</reference>
<keyword id="KW-0997">Cell inner membrane</keyword>
<keyword id="KW-1003">Cell membrane</keyword>
<keyword id="KW-0378">Hydrolase</keyword>
<keyword id="KW-0472">Membrane</keyword>
<keyword id="KW-0479">Metal-binding</keyword>
<keyword id="KW-0482">Metalloprotease</keyword>
<keyword id="KW-0645">Protease</keyword>
<keyword id="KW-1185">Reference proteome</keyword>
<keyword id="KW-0812">Transmembrane</keyword>
<keyword id="KW-1133">Transmembrane helix</keyword>
<keyword id="KW-0862">Zinc</keyword>
<protein>
    <recommendedName>
        <fullName evidence="1">Protease HtpX</fullName>
        <ecNumber evidence="1">3.4.24.-</ecNumber>
    </recommendedName>
    <alternativeName>
        <fullName evidence="1">Heat shock protein HtpX</fullName>
    </alternativeName>
</protein>
<accession>B7L7N1</accession>